<evidence type="ECO:0000256" key="1">
    <source>
        <dbReference type="SAM" id="MobiDB-lite"/>
    </source>
</evidence>
<evidence type="ECO:0000269" key="2">
    <source>
    </source>
</evidence>
<evidence type="ECO:0000269" key="3">
    <source>
    </source>
</evidence>
<evidence type="ECO:0000303" key="4">
    <source>
    </source>
</evidence>
<evidence type="ECO:0000305" key="5"/>
<evidence type="ECO:0000312" key="6">
    <source>
        <dbReference type="HGNC" id="HGNC:22209"/>
    </source>
</evidence>
<evidence type="ECO:0007744" key="7">
    <source>
    </source>
</evidence>
<dbReference type="EMBL" id="AB032996">
    <property type="protein sequence ID" value="BAA86484.1"/>
    <property type="status" value="ALT_INIT"/>
    <property type="molecule type" value="mRNA"/>
</dbReference>
<dbReference type="EMBL" id="AC009244">
    <property type="status" value="NOT_ANNOTATED_CDS"/>
    <property type="molecule type" value="Genomic_DNA"/>
</dbReference>
<dbReference type="EMBL" id="BC019064">
    <property type="protein sequence ID" value="AAH19064.1"/>
    <property type="molecule type" value="mRNA"/>
</dbReference>
<dbReference type="CCDS" id="CCDS34752.1">
    <molecule id="Q9ULQ0-1"/>
</dbReference>
<dbReference type="CCDS" id="CCDS47709.1">
    <molecule id="Q9ULQ0-2"/>
</dbReference>
<dbReference type="RefSeq" id="NP_001127808.1">
    <molecule id="Q9ULQ0-2"/>
    <property type="nucleotide sequence ID" value="NM_001134336.2"/>
</dbReference>
<dbReference type="RefSeq" id="NP_065755.1">
    <molecule id="Q9ULQ0-1"/>
    <property type="nucleotide sequence ID" value="NM_020704.3"/>
</dbReference>
<dbReference type="SMR" id="Q9ULQ0"/>
<dbReference type="BioGRID" id="121534">
    <property type="interactions" value="39"/>
</dbReference>
<dbReference type="ComplexPortal" id="CPX-8601">
    <property type="entry name" value="STRIPAK complex, STRIP2-STRN3 variant"/>
</dbReference>
<dbReference type="ComplexPortal" id="CPX-8605">
    <property type="entry name" value="STRIPAK complex, STRIP2-STRN variant"/>
</dbReference>
<dbReference type="ComplexPortal" id="CPX-8607">
    <property type="entry name" value="STRIPAK complex, STRIP2-STRN4 variant"/>
</dbReference>
<dbReference type="DIP" id="DIP-51635N"/>
<dbReference type="FunCoup" id="Q9ULQ0">
    <property type="interactions" value="1449"/>
</dbReference>
<dbReference type="IntAct" id="Q9ULQ0">
    <property type="interactions" value="36"/>
</dbReference>
<dbReference type="MINT" id="Q9ULQ0"/>
<dbReference type="STRING" id="9606.ENSP00000249344"/>
<dbReference type="iPTMnet" id="Q9ULQ0"/>
<dbReference type="PhosphoSitePlus" id="Q9ULQ0"/>
<dbReference type="SwissPalm" id="Q9ULQ0"/>
<dbReference type="BioMuta" id="STRIP2"/>
<dbReference type="DMDM" id="71151881"/>
<dbReference type="jPOST" id="Q9ULQ0"/>
<dbReference type="MassIVE" id="Q9ULQ0"/>
<dbReference type="PaxDb" id="9606-ENSP00000249344"/>
<dbReference type="PeptideAtlas" id="Q9ULQ0"/>
<dbReference type="ProteomicsDB" id="85092">
    <molecule id="Q9ULQ0-1"/>
</dbReference>
<dbReference type="ProteomicsDB" id="85093">
    <molecule id="Q9ULQ0-2"/>
</dbReference>
<dbReference type="Pumba" id="Q9ULQ0"/>
<dbReference type="Antibodypedia" id="17893">
    <property type="antibodies" value="59 antibodies from 19 providers"/>
</dbReference>
<dbReference type="DNASU" id="57464"/>
<dbReference type="Ensembl" id="ENST00000249344.7">
    <molecule id="Q9ULQ0-1"/>
    <property type="protein sequence ID" value="ENSP00000249344.2"/>
    <property type="gene ID" value="ENSG00000128578.10"/>
</dbReference>
<dbReference type="Ensembl" id="ENST00000435494.2">
    <molecule id="Q9ULQ0-2"/>
    <property type="protein sequence ID" value="ENSP00000392393.2"/>
    <property type="gene ID" value="ENSG00000128578.10"/>
</dbReference>
<dbReference type="GeneID" id="57464"/>
<dbReference type="KEGG" id="hsa:57464"/>
<dbReference type="MANE-Select" id="ENST00000249344.7">
    <property type="protein sequence ID" value="ENSP00000249344.2"/>
    <property type="RefSeq nucleotide sequence ID" value="NM_020704.3"/>
    <property type="RefSeq protein sequence ID" value="NP_065755.1"/>
</dbReference>
<dbReference type="UCSC" id="uc003vow.5">
    <molecule id="Q9ULQ0-1"/>
    <property type="organism name" value="human"/>
</dbReference>
<dbReference type="AGR" id="HGNC:22209"/>
<dbReference type="CTD" id="57464"/>
<dbReference type="DisGeNET" id="57464"/>
<dbReference type="GeneCards" id="STRIP2"/>
<dbReference type="HGNC" id="HGNC:22209">
    <property type="gene designation" value="STRIP2"/>
</dbReference>
<dbReference type="HPA" id="ENSG00000128578">
    <property type="expression patterns" value="Tissue enhanced (brain, choroid plexus, skeletal muscle)"/>
</dbReference>
<dbReference type="MIM" id="617919">
    <property type="type" value="gene"/>
</dbReference>
<dbReference type="neXtProt" id="NX_Q9ULQ0"/>
<dbReference type="OpenTargets" id="ENSG00000128578"/>
<dbReference type="PharmGKB" id="PA134923427"/>
<dbReference type="VEuPathDB" id="HostDB:ENSG00000128578"/>
<dbReference type="eggNOG" id="KOG3680">
    <property type="taxonomic scope" value="Eukaryota"/>
</dbReference>
<dbReference type="GeneTree" id="ENSGT00400000022095"/>
<dbReference type="HOGENOM" id="CLU_011008_1_0_1"/>
<dbReference type="InParanoid" id="Q9ULQ0"/>
<dbReference type="OMA" id="ETDSYGW"/>
<dbReference type="OrthoDB" id="18234at2759"/>
<dbReference type="PAN-GO" id="Q9ULQ0">
    <property type="GO annotations" value="2 GO annotations based on evolutionary models"/>
</dbReference>
<dbReference type="PhylomeDB" id="Q9ULQ0"/>
<dbReference type="TreeFam" id="TF314205"/>
<dbReference type="PathwayCommons" id="Q9ULQ0"/>
<dbReference type="SignaLink" id="Q9ULQ0"/>
<dbReference type="BioGRID-ORCS" id="57464">
    <property type="hits" value="9 hits in 1152 CRISPR screens"/>
</dbReference>
<dbReference type="ChiTaRS" id="STRIP2">
    <property type="organism name" value="human"/>
</dbReference>
<dbReference type="GenomeRNAi" id="57464"/>
<dbReference type="Pharos" id="Q9ULQ0">
    <property type="development level" value="Tbio"/>
</dbReference>
<dbReference type="PRO" id="PR:Q9ULQ0"/>
<dbReference type="Proteomes" id="UP000005640">
    <property type="component" value="Chromosome 7"/>
</dbReference>
<dbReference type="RNAct" id="Q9ULQ0">
    <property type="molecule type" value="protein"/>
</dbReference>
<dbReference type="Bgee" id="ENSG00000128578">
    <property type="expression patterns" value="Expressed in pigmented layer of retina and 143 other cell types or tissues"/>
</dbReference>
<dbReference type="GO" id="GO:0005737">
    <property type="term" value="C:cytoplasm"/>
    <property type="evidence" value="ECO:0000314"/>
    <property type="project" value="UniProtKB"/>
</dbReference>
<dbReference type="GO" id="GO:0005829">
    <property type="term" value="C:cytosol"/>
    <property type="evidence" value="ECO:0000314"/>
    <property type="project" value="HPA"/>
</dbReference>
<dbReference type="GO" id="GO:0090443">
    <property type="term" value="C:FAR/SIN/STRIPAK complex"/>
    <property type="evidence" value="ECO:0000314"/>
    <property type="project" value="UniProtKB"/>
</dbReference>
<dbReference type="GO" id="GO:0016477">
    <property type="term" value="P:cell migration"/>
    <property type="evidence" value="ECO:0000315"/>
    <property type="project" value="UniProtKB"/>
</dbReference>
<dbReference type="GO" id="GO:0007010">
    <property type="term" value="P:cytoskeleton organization"/>
    <property type="evidence" value="ECO:0000315"/>
    <property type="project" value="UniProtKB"/>
</dbReference>
<dbReference type="GO" id="GO:0008360">
    <property type="term" value="P:regulation of cell shape"/>
    <property type="evidence" value="ECO:0000315"/>
    <property type="project" value="UniProtKB"/>
</dbReference>
<dbReference type="InterPro" id="IPR040185">
    <property type="entry name" value="Far11/STRP"/>
</dbReference>
<dbReference type="InterPro" id="IPR021819">
    <property type="entry name" value="Far11/STRP_C"/>
</dbReference>
<dbReference type="InterPro" id="IPR012486">
    <property type="entry name" value="Far11/STRP_N"/>
</dbReference>
<dbReference type="PANTHER" id="PTHR13239">
    <property type="entry name" value="PROTEIN REQUIRED FOR HYPHAL ANASTOMOSIS HAM-2"/>
    <property type="match status" value="1"/>
</dbReference>
<dbReference type="PANTHER" id="PTHR13239:SF6">
    <property type="entry name" value="STRIATIN-INTERACTING PROTEIN 2"/>
    <property type="match status" value="1"/>
</dbReference>
<dbReference type="Pfam" id="PF11882">
    <property type="entry name" value="DUF3402"/>
    <property type="match status" value="2"/>
</dbReference>
<dbReference type="Pfam" id="PF07923">
    <property type="entry name" value="N1221"/>
    <property type="match status" value="1"/>
</dbReference>
<dbReference type="SMART" id="SM01293">
    <property type="entry name" value="DUF3402"/>
    <property type="match status" value="1"/>
</dbReference>
<dbReference type="SMART" id="SM01292">
    <property type="entry name" value="N1221"/>
    <property type="match status" value="1"/>
</dbReference>
<protein>
    <recommendedName>
        <fullName>Striatin-interacting protein 2</fullName>
    </recommendedName>
    <alternativeName>
        <fullName>Protein FAM40B</fullName>
    </alternativeName>
</protein>
<accession>Q9ULQ0</accession>
<accession>Q8WUZ4</accession>
<feature type="chain" id="PRO_0000187022" description="Striatin-interacting protein 2">
    <location>
        <begin position="1"/>
        <end position="834"/>
    </location>
</feature>
<feature type="region of interest" description="Disordered" evidence="1">
    <location>
        <begin position="1"/>
        <end position="48"/>
    </location>
</feature>
<feature type="region of interest" description="Disordered" evidence="1">
    <location>
        <begin position="321"/>
        <end position="345"/>
    </location>
</feature>
<feature type="region of interest" description="Disordered" evidence="1">
    <location>
        <begin position="360"/>
        <end position="382"/>
    </location>
</feature>
<feature type="compositionally biased region" description="Gly residues" evidence="1">
    <location>
        <begin position="8"/>
        <end position="24"/>
    </location>
</feature>
<feature type="compositionally biased region" description="Basic and acidic residues" evidence="1">
    <location>
        <begin position="30"/>
        <end position="43"/>
    </location>
</feature>
<feature type="compositionally biased region" description="Acidic residues" evidence="1">
    <location>
        <begin position="369"/>
        <end position="379"/>
    </location>
</feature>
<feature type="modified residue" description="Phosphoserine" evidence="7">
    <location>
        <position position="318"/>
    </location>
</feature>
<feature type="modified residue" description="Phosphoserine" evidence="7">
    <location>
        <position position="329"/>
    </location>
</feature>
<feature type="modified residue" description="Phosphoserine" evidence="7">
    <location>
        <position position="354"/>
    </location>
</feature>
<feature type="splice variant" id="VSP_014867" description="In isoform 2." evidence="4">
    <original>DIDARPW</original>
    <variation>GESSQSS</variation>
    <location>
        <begin position="752"/>
        <end position="758"/>
    </location>
</feature>
<feature type="splice variant" id="VSP_014868" description="In isoform 2." evidence="4">
    <location>
        <begin position="759"/>
        <end position="834"/>
    </location>
</feature>
<feature type="sequence variant" id="VAR_049021" description="In dbSNP:rs2242030.">
    <original>R</original>
    <variation>Q</variation>
    <location>
        <position position="383"/>
    </location>
</feature>
<gene>
    <name evidence="6" type="primary">STRIP2</name>
    <name type="synonym">FAM40B</name>
    <name type="synonym">KIAA1170</name>
</gene>
<organism>
    <name type="scientific">Homo sapiens</name>
    <name type="common">Human</name>
    <dbReference type="NCBI Taxonomy" id="9606"/>
    <lineage>
        <taxon>Eukaryota</taxon>
        <taxon>Metazoa</taxon>
        <taxon>Chordata</taxon>
        <taxon>Craniata</taxon>
        <taxon>Vertebrata</taxon>
        <taxon>Euteleostomi</taxon>
        <taxon>Mammalia</taxon>
        <taxon>Eutheria</taxon>
        <taxon>Euarchontoglires</taxon>
        <taxon>Primates</taxon>
        <taxon>Haplorrhini</taxon>
        <taxon>Catarrhini</taxon>
        <taxon>Hominidae</taxon>
        <taxon>Homo</taxon>
    </lineage>
</organism>
<sequence>MEDPAAPGTGGPPANGNGNGGGKGKQAAPKGREAFRSQRRESEGSVDCPTLEFEYGDADGHAAELSELYSYTENLEFTNNRRCFEEDFKTQVQGKEWLELEEDAQKAYIMGLLDRLEVVSRERRLKVARAVLYLAQGTFGECDSEVDVLHWSRYNCFLLYQMGTFSTFLELLHMEIDNSQACSSALRKPAVSIADSTELRVLLSVMYLMVENIRLERETDPCGWRTARETFRTELSFSMHNEEPFALLLFSMVTKFCSGLAPHFPIKKVLLLLWKVVMFTLGGFEHLQTLKVQKRAELGLPPLAEDSIQVVKSMRAASPPSYTLDLGESQLAPPPSKLRGRRGSRRQLLTKQDSLDIYNERDLFKTEEPATEEEEESAGDGERTLDGELDLLEQDPLVPPPPSQAPLSAERVAFPKGLPWAPKVRQKDIEHFLEMSRNKFIGFTLGQDTDTLVGLPRPIHESVKTLKQHKYISIADVQIKNEEELEKCPMSLGEEVVPETPCEILYQGMLYSLPQYMIALLKILLAAAPTSKAKTDSINILADVLPEEMPITVLQSMKLGIDVNRHKEIIVKSISTLLLLLLKHFKLNHIYQFEYVSQHLVFANCIPLILKFFNQNILSYITAKNSISVLDYPCCTIQDLPELTTESLEAGDNSQFCWRNLFSCINLLRLLNKLTKWKHSRTMMLVVFKSAPILKRALKVKQAMLQLYVLKLLKLQTKYLGRQWRKSNMKTMSAIYQKVRHRMNDDWAYGNDIDARPWDFQAEECTLRANIEAFNSRRYDRPQDSEFSPVDNCLQSVLGQRLDLPEDFHYSYELWLEREVFSQPICWEELLQNH</sequence>
<name>STRP2_HUMAN</name>
<reference key="1">
    <citation type="journal article" date="1999" name="DNA Res.">
        <title>Characterization of cDNA clones selected by the GeneMark analysis from size-fractionated cDNA libraries from human brain.</title>
        <authorList>
            <person name="Hirosawa M."/>
            <person name="Nagase T."/>
            <person name="Ishikawa K."/>
            <person name="Kikuno R."/>
            <person name="Nomura N."/>
            <person name="Ohara O."/>
        </authorList>
    </citation>
    <scope>NUCLEOTIDE SEQUENCE [LARGE SCALE MRNA] (ISOFORM 1)</scope>
    <source>
        <tissue>Brain</tissue>
    </source>
</reference>
<reference key="2">
    <citation type="journal article" date="2003" name="Nature">
        <title>The DNA sequence of human chromosome 7.</title>
        <authorList>
            <person name="Hillier L.W."/>
            <person name="Fulton R.S."/>
            <person name="Fulton L.A."/>
            <person name="Graves T.A."/>
            <person name="Pepin K.H."/>
            <person name="Wagner-McPherson C."/>
            <person name="Layman D."/>
            <person name="Maas J."/>
            <person name="Jaeger S."/>
            <person name="Walker R."/>
            <person name="Wylie K."/>
            <person name="Sekhon M."/>
            <person name="Becker M.C."/>
            <person name="O'Laughlin M.D."/>
            <person name="Schaller M.E."/>
            <person name="Fewell G.A."/>
            <person name="Delehaunty K.D."/>
            <person name="Miner T.L."/>
            <person name="Nash W.E."/>
            <person name="Cordes M."/>
            <person name="Du H."/>
            <person name="Sun H."/>
            <person name="Edwards J."/>
            <person name="Bradshaw-Cordum H."/>
            <person name="Ali J."/>
            <person name="Andrews S."/>
            <person name="Isak A."/>
            <person name="Vanbrunt A."/>
            <person name="Nguyen C."/>
            <person name="Du F."/>
            <person name="Lamar B."/>
            <person name="Courtney L."/>
            <person name="Kalicki J."/>
            <person name="Ozersky P."/>
            <person name="Bielicki L."/>
            <person name="Scott K."/>
            <person name="Holmes A."/>
            <person name="Harkins R."/>
            <person name="Harris A."/>
            <person name="Strong C.M."/>
            <person name="Hou S."/>
            <person name="Tomlinson C."/>
            <person name="Dauphin-Kohlberg S."/>
            <person name="Kozlowicz-Reilly A."/>
            <person name="Leonard S."/>
            <person name="Rohlfing T."/>
            <person name="Rock S.M."/>
            <person name="Tin-Wollam A.-M."/>
            <person name="Abbott A."/>
            <person name="Minx P."/>
            <person name="Maupin R."/>
            <person name="Strowmatt C."/>
            <person name="Latreille P."/>
            <person name="Miller N."/>
            <person name="Johnson D."/>
            <person name="Murray J."/>
            <person name="Woessner J.P."/>
            <person name="Wendl M.C."/>
            <person name="Yang S.-P."/>
            <person name="Schultz B.R."/>
            <person name="Wallis J.W."/>
            <person name="Spieth J."/>
            <person name="Bieri T.A."/>
            <person name="Nelson J.O."/>
            <person name="Berkowicz N."/>
            <person name="Wohldmann P.E."/>
            <person name="Cook L.L."/>
            <person name="Hickenbotham M.T."/>
            <person name="Eldred J."/>
            <person name="Williams D."/>
            <person name="Bedell J.A."/>
            <person name="Mardis E.R."/>
            <person name="Clifton S.W."/>
            <person name="Chissoe S.L."/>
            <person name="Marra M.A."/>
            <person name="Raymond C."/>
            <person name="Haugen E."/>
            <person name="Gillett W."/>
            <person name="Zhou Y."/>
            <person name="James R."/>
            <person name="Phelps K."/>
            <person name="Iadanoto S."/>
            <person name="Bubb K."/>
            <person name="Simms E."/>
            <person name="Levy R."/>
            <person name="Clendenning J."/>
            <person name="Kaul R."/>
            <person name="Kent W.J."/>
            <person name="Furey T.S."/>
            <person name="Baertsch R.A."/>
            <person name="Brent M.R."/>
            <person name="Keibler E."/>
            <person name="Flicek P."/>
            <person name="Bork P."/>
            <person name="Suyama M."/>
            <person name="Bailey J.A."/>
            <person name="Portnoy M.E."/>
            <person name="Torrents D."/>
            <person name="Chinwalla A.T."/>
            <person name="Gish W.R."/>
            <person name="Eddy S.R."/>
            <person name="McPherson J.D."/>
            <person name="Olson M.V."/>
            <person name="Eichler E.E."/>
            <person name="Green E.D."/>
            <person name="Waterston R.H."/>
            <person name="Wilson R.K."/>
        </authorList>
    </citation>
    <scope>NUCLEOTIDE SEQUENCE [LARGE SCALE GENOMIC DNA]</scope>
</reference>
<reference key="3">
    <citation type="journal article" date="2004" name="Genome Res.">
        <title>The status, quality, and expansion of the NIH full-length cDNA project: the Mammalian Gene Collection (MGC).</title>
        <authorList>
            <consortium name="The MGC Project Team"/>
        </authorList>
    </citation>
    <scope>NUCLEOTIDE SEQUENCE [LARGE SCALE MRNA] (ISOFORM 2)</scope>
    <source>
        <tissue>Kidney</tissue>
    </source>
</reference>
<reference key="4">
    <citation type="journal article" date="2009" name="Mol. Cell. Proteomics">
        <title>A PP2A phosphatase high density interaction network identifies a novel striatin-interacting phosphatase and kinase complex linked to the cerebral cavernous malformation 3 (CCM3) protein.</title>
        <authorList>
            <person name="Goudreault M."/>
            <person name="D'Ambrosio L.M."/>
            <person name="Kean M.J."/>
            <person name="Mullin M.J."/>
            <person name="Larsen B.G."/>
            <person name="Sanchez A."/>
            <person name="Chaudhry S."/>
            <person name="Chen G.I."/>
            <person name="Sicheri F."/>
            <person name="Nesvizhskii A.I."/>
            <person name="Aebersold R."/>
            <person name="Raught B."/>
            <person name="Gingras A.C."/>
        </authorList>
    </citation>
    <scope>INTERACTION WITH CTTNBP2NL</scope>
    <scope>IDENTIFICATION IN STRIPAK COMPLEX</scope>
    <scope>FUNCTION</scope>
</reference>
<reference key="5">
    <citation type="journal article" date="2011" name="BMC Biol.">
        <title>Identification and characterization of a set of conserved and new regulators of cytoskeletal organisation, cell morphology and migration.</title>
        <authorList>
            <person name="Bai S.W."/>
            <person name="Herrera-Abreu M.T."/>
            <person name="Rohn J.L."/>
            <person name="Racine V."/>
            <person name="Tajadura V."/>
            <person name="Suryavanshi N."/>
            <person name="Bechtel S."/>
            <person name="Wiemann S."/>
            <person name="Baum B."/>
            <person name="Ridley A.J."/>
        </authorList>
    </citation>
    <scope>FUNCTION</scope>
    <scope>SUBCELLULAR LOCATION</scope>
</reference>
<reference key="6">
    <citation type="journal article" date="2013" name="J. Proteome Res.">
        <title>Toward a comprehensive characterization of a human cancer cell phosphoproteome.</title>
        <authorList>
            <person name="Zhou H."/>
            <person name="Di Palma S."/>
            <person name="Preisinger C."/>
            <person name="Peng M."/>
            <person name="Polat A.N."/>
            <person name="Heck A.J."/>
            <person name="Mohammed S."/>
        </authorList>
    </citation>
    <scope>PHOSPHORYLATION [LARGE SCALE ANALYSIS] AT SER-318; SER-329 AND SER-354</scope>
    <scope>IDENTIFICATION BY MASS SPECTROMETRY [LARGE SCALE ANALYSIS]</scope>
    <source>
        <tissue>Cervix carcinoma</tissue>
        <tissue>Erythroleukemia</tissue>
    </source>
</reference>
<keyword id="KW-0025">Alternative splicing</keyword>
<keyword id="KW-0963">Cytoplasm</keyword>
<keyword id="KW-0597">Phosphoprotein</keyword>
<keyword id="KW-1267">Proteomics identification</keyword>
<keyword id="KW-1185">Reference proteome</keyword>
<comment type="function">
    <text evidence="2 3">Plays a role in the regulation of cell morphology and cytoskeletal organization. Required in the control of cell shape (PubMed:21834987). Calmodulin-binding scaffolding protein which is the center of the striatin-interacting phosphatase and kinase (STRIPAK) complexes. STRIPAK complexes have critical roles in protein (de)phosphorylation and are regulators of multiple signaling pathways including Hippo, MAPK, nuclear receptor and cytoskeleton remodeling. Different types of STRIPAK complexes are involved in a variety of biological processes such as cell growth, differentiation, apoptosis, metabolism and immune regulation (PubMed:18782753).</text>
</comment>
<comment type="subunit">
    <text evidence="2">Part of the core of STRIPAK complexes composed of PP2A catalytic and scaffolding subunits, the striatins (PP2A regulatory subunits), the striatin-associated proteins MOB4, STRIP1 and STRIP2, PDCD10 and members of the STE20 kinases, such as STK24 and STK26 (PubMed:18782753). Interacts with CTTNBP2NL.</text>
</comment>
<comment type="subcellular location">
    <subcellularLocation>
        <location evidence="3">Cytoplasm</location>
    </subcellularLocation>
    <text evidence="3">Enriched in lamellipodia.</text>
</comment>
<comment type="alternative products">
    <event type="alternative splicing"/>
    <isoform>
        <id>Q9ULQ0-1</id>
        <name>1</name>
        <sequence type="displayed"/>
    </isoform>
    <isoform>
        <id>Q9ULQ0-2</id>
        <name>2</name>
        <sequence type="described" ref="VSP_014867 VSP_014868"/>
    </isoform>
</comment>
<comment type="similarity">
    <text evidence="5">Belongs to the STRIP family.</text>
</comment>
<comment type="sequence caution" evidence="5">
    <conflict type="erroneous initiation">
        <sequence resource="EMBL-CDS" id="BAA86484"/>
    </conflict>
    <text>Extended N-terminus.</text>
</comment>
<proteinExistence type="evidence at protein level"/>